<proteinExistence type="inferred from homology"/>
<gene>
    <name type="primary">CYP10</name>
    <name type="ORF">FGRRES_00940</name>
    <name type="ORF">FGSG_00940</name>
</gene>
<keyword id="KW-0413">Isomerase</keyword>
<keyword id="KW-1185">Reference proteome</keyword>
<keyword id="KW-0697">Rotamase</keyword>
<protein>
    <recommendedName>
        <fullName>Peptidyl-prolyl cis-trans isomerase-like 3</fullName>
        <shortName>PPIase</shortName>
        <ecNumber>5.2.1.8</ecNumber>
    </recommendedName>
    <alternativeName>
        <fullName>Rotamase</fullName>
    </alternativeName>
</protein>
<accession>Q4IPB8</accession>
<accession>A0A0E0RP10</accession>
<accession>V6QVC6</accession>
<name>PPIL3_GIBZE</name>
<evidence type="ECO:0000250" key="1"/>
<evidence type="ECO:0000255" key="2">
    <source>
        <dbReference type="PROSITE-ProRule" id="PRU00156"/>
    </source>
</evidence>
<evidence type="ECO:0000305" key="3"/>
<sequence length="167" mass="18022">MSVTLHTSHGDIKVEIYCESVPKTAENFLALCGSGYYDKSPFHRVIPKFMAQTGAPATPNPPENPKGGRSIWGGAFEDEIRPALRHGARGVLSMANKGPGTNGSQFFITFDKAPHLDGLNTVFGRVIGDEGLATLAKMEAVEVDRKNRPKEPVRIENVTIHANPLAG</sequence>
<comment type="function">
    <text evidence="1">PPIases accelerate the folding of proteins. It catalyzes the cis-trans isomerization of proline imidic peptide bonds in oligopeptides (By similarity).</text>
</comment>
<comment type="catalytic activity">
    <reaction>
        <text>[protein]-peptidylproline (omega=180) = [protein]-peptidylproline (omega=0)</text>
        <dbReference type="Rhea" id="RHEA:16237"/>
        <dbReference type="Rhea" id="RHEA-COMP:10747"/>
        <dbReference type="Rhea" id="RHEA-COMP:10748"/>
        <dbReference type="ChEBI" id="CHEBI:83833"/>
        <dbReference type="ChEBI" id="CHEBI:83834"/>
        <dbReference type="EC" id="5.2.1.8"/>
    </reaction>
</comment>
<comment type="similarity">
    <text evidence="3">Belongs to the cyclophilin-type PPIase family. PPIL3 subfamily.</text>
</comment>
<feature type="chain" id="PRO_0000232971" description="Peptidyl-prolyl cis-trans isomerase-like 3">
    <location>
        <begin position="1"/>
        <end position="167"/>
    </location>
</feature>
<feature type="domain" description="PPIase cyclophilin-type" evidence="2">
    <location>
        <begin position="1"/>
        <end position="160"/>
    </location>
</feature>
<dbReference type="EC" id="5.2.1.8"/>
<dbReference type="EMBL" id="DS231663">
    <property type="protein sequence ID" value="ESU06196.1"/>
    <property type="molecule type" value="Genomic_DNA"/>
</dbReference>
<dbReference type="EMBL" id="HG970332">
    <property type="protein sequence ID" value="CEF72985.1"/>
    <property type="molecule type" value="Genomic_DNA"/>
</dbReference>
<dbReference type="RefSeq" id="XP_011316681.1">
    <property type="nucleotide sequence ID" value="XM_011318379.1"/>
</dbReference>
<dbReference type="SMR" id="Q4IPB8"/>
<dbReference type="STRING" id="229533.Q4IPB8"/>
<dbReference type="GeneID" id="23548406"/>
<dbReference type="KEGG" id="fgr:FGSG_00940"/>
<dbReference type="VEuPathDB" id="FungiDB:FGRAMPH1_01G02367"/>
<dbReference type="eggNOG" id="KOG0884">
    <property type="taxonomic scope" value="Eukaryota"/>
</dbReference>
<dbReference type="HOGENOM" id="CLU_012062_16_3_1"/>
<dbReference type="InParanoid" id="Q4IPB8"/>
<dbReference type="OrthoDB" id="5406at110618"/>
<dbReference type="Proteomes" id="UP000070720">
    <property type="component" value="Chromosome 1"/>
</dbReference>
<dbReference type="GO" id="GO:0071013">
    <property type="term" value="C:catalytic step 2 spliceosome"/>
    <property type="evidence" value="ECO:0007669"/>
    <property type="project" value="TreeGrafter"/>
</dbReference>
<dbReference type="GO" id="GO:0003755">
    <property type="term" value="F:peptidyl-prolyl cis-trans isomerase activity"/>
    <property type="evidence" value="ECO:0007669"/>
    <property type="project" value="UniProtKB-KW"/>
</dbReference>
<dbReference type="GO" id="GO:0006457">
    <property type="term" value="P:protein folding"/>
    <property type="evidence" value="ECO:0007669"/>
    <property type="project" value="InterPro"/>
</dbReference>
<dbReference type="CDD" id="cd01928">
    <property type="entry name" value="Cyclophilin_PPIL3_like"/>
    <property type="match status" value="1"/>
</dbReference>
<dbReference type="Gene3D" id="2.40.100.10">
    <property type="entry name" value="Cyclophilin-like"/>
    <property type="match status" value="1"/>
</dbReference>
<dbReference type="InterPro" id="IPR029000">
    <property type="entry name" value="Cyclophilin-like_dom_sf"/>
</dbReference>
<dbReference type="InterPro" id="IPR024936">
    <property type="entry name" value="Cyclophilin-type_PPIase"/>
</dbReference>
<dbReference type="InterPro" id="IPR020892">
    <property type="entry name" value="Cyclophilin-type_PPIase_CS"/>
</dbReference>
<dbReference type="InterPro" id="IPR002130">
    <property type="entry name" value="Cyclophilin-type_PPIase_dom"/>
</dbReference>
<dbReference type="InterPro" id="IPR044666">
    <property type="entry name" value="Cyclophilin_A-like"/>
</dbReference>
<dbReference type="PANTHER" id="PTHR45625:SF2">
    <property type="entry name" value="PEPTIDYL-PROLYL CIS-TRANS ISOMERASE-LIKE 3"/>
    <property type="match status" value="1"/>
</dbReference>
<dbReference type="PANTHER" id="PTHR45625">
    <property type="entry name" value="PEPTIDYL-PROLYL CIS-TRANS ISOMERASE-RELATED"/>
    <property type="match status" value="1"/>
</dbReference>
<dbReference type="Pfam" id="PF00160">
    <property type="entry name" value="Pro_isomerase"/>
    <property type="match status" value="1"/>
</dbReference>
<dbReference type="PIRSF" id="PIRSF001467">
    <property type="entry name" value="Peptidylpro_ismrse"/>
    <property type="match status" value="1"/>
</dbReference>
<dbReference type="PRINTS" id="PR00153">
    <property type="entry name" value="CSAPPISMRASE"/>
</dbReference>
<dbReference type="SUPFAM" id="SSF50891">
    <property type="entry name" value="Cyclophilin-like"/>
    <property type="match status" value="1"/>
</dbReference>
<dbReference type="PROSITE" id="PS00170">
    <property type="entry name" value="CSA_PPIASE_1"/>
    <property type="match status" value="1"/>
</dbReference>
<dbReference type="PROSITE" id="PS50072">
    <property type="entry name" value="CSA_PPIASE_2"/>
    <property type="match status" value="1"/>
</dbReference>
<reference key="1">
    <citation type="journal article" date="2007" name="Science">
        <title>The Fusarium graminearum genome reveals a link between localized polymorphism and pathogen specialization.</title>
        <authorList>
            <person name="Cuomo C.A."/>
            <person name="Gueldener U."/>
            <person name="Xu J.-R."/>
            <person name="Trail F."/>
            <person name="Turgeon B.G."/>
            <person name="Di Pietro A."/>
            <person name="Walton J.D."/>
            <person name="Ma L.-J."/>
            <person name="Baker S.E."/>
            <person name="Rep M."/>
            <person name="Adam G."/>
            <person name="Antoniw J."/>
            <person name="Baldwin T."/>
            <person name="Calvo S.E."/>
            <person name="Chang Y.-L."/>
            <person name="DeCaprio D."/>
            <person name="Gale L.R."/>
            <person name="Gnerre S."/>
            <person name="Goswami R.S."/>
            <person name="Hammond-Kosack K."/>
            <person name="Harris L.J."/>
            <person name="Hilburn K."/>
            <person name="Kennell J.C."/>
            <person name="Kroken S."/>
            <person name="Magnuson J.K."/>
            <person name="Mannhaupt G."/>
            <person name="Mauceli E.W."/>
            <person name="Mewes H.-W."/>
            <person name="Mitterbauer R."/>
            <person name="Muehlbauer G."/>
            <person name="Muensterkoetter M."/>
            <person name="Nelson D."/>
            <person name="O'Donnell K."/>
            <person name="Ouellet T."/>
            <person name="Qi W."/>
            <person name="Quesneville H."/>
            <person name="Roncero M.I.G."/>
            <person name="Seong K.-Y."/>
            <person name="Tetko I.V."/>
            <person name="Urban M."/>
            <person name="Waalwijk C."/>
            <person name="Ward T.J."/>
            <person name="Yao J."/>
            <person name="Birren B.W."/>
            <person name="Kistler H.C."/>
        </authorList>
    </citation>
    <scope>NUCLEOTIDE SEQUENCE [LARGE SCALE GENOMIC DNA]</scope>
    <source>
        <strain>ATCC MYA-4620 / CBS 123657 / FGSC 9075 / NRRL 31084 / PH-1</strain>
    </source>
</reference>
<reference key="2">
    <citation type="journal article" date="2010" name="Nature">
        <title>Comparative genomics reveals mobile pathogenicity chromosomes in Fusarium.</title>
        <authorList>
            <person name="Ma L.-J."/>
            <person name="van der Does H.C."/>
            <person name="Borkovich K.A."/>
            <person name="Coleman J.J."/>
            <person name="Daboussi M.-J."/>
            <person name="Di Pietro A."/>
            <person name="Dufresne M."/>
            <person name="Freitag M."/>
            <person name="Grabherr M."/>
            <person name="Henrissat B."/>
            <person name="Houterman P.M."/>
            <person name="Kang S."/>
            <person name="Shim W.-B."/>
            <person name="Woloshuk C."/>
            <person name="Xie X."/>
            <person name="Xu J.-R."/>
            <person name="Antoniw J."/>
            <person name="Baker S.E."/>
            <person name="Bluhm B.H."/>
            <person name="Breakspear A."/>
            <person name="Brown D.W."/>
            <person name="Butchko R.A.E."/>
            <person name="Chapman S."/>
            <person name="Coulson R."/>
            <person name="Coutinho P.M."/>
            <person name="Danchin E.G.J."/>
            <person name="Diener A."/>
            <person name="Gale L.R."/>
            <person name="Gardiner D.M."/>
            <person name="Goff S."/>
            <person name="Hammond-Kosack K.E."/>
            <person name="Hilburn K."/>
            <person name="Hua-Van A."/>
            <person name="Jonkers W."/>
            <person name="Kazan K."/>
            <person name="Kodira C.D."/>
            <person name="Koehrsen M."/>
            <person name="Kumar L."/>
            <person name="Lee Y.-H."/>
            <person name="Li L."/>
            <person name="Manners J.M."/>
            <person name="Miranda-Saavedra D."/>
            <person name="Mukherjee M."/>
            <person name="Park G."/>
            <person name="Park J."/>
            <person name="Park S.-Y."/>
            <person name="Proctor R.H."/>
            <person name="Regev A."/>
            <person name="Ruiz-Roldan M.C."/>
            <person name="Sain D."/>
            <person name="Sakthikumar S."/>
            <person name="Sykes S."/>
            <person name="Schwartz D.C."/>
            <person name="Turgeon B.G."/>
            <person name="Wapinski I."/>
            <person name="Yoder O."/>
            <person name="Young S."/>
            <person name="Zeng Q."/>
            <person name="Zhou S."/>
            <person name="Galagan J."/>
            <person name="Cuomo C.A."/>
            <person name="Kistler H.C."/>
            <person name="Rep M."/>
        </authorList>
    </citation>
    <scope>GENOME REANNOTATION</scope>
    <source>
        <strain>ATCC MYA-4620 / CBS 123657 / FGSC 9075 / NRRL 31084 / PH-1</strain>
    </source>
</reference>
<reference key="3">
    <citation type="journal article" date="2006" name="BMC Genomics">
        <title>Identification and comparative analysis of sixteen fungal peptidyl-prolyl cis/trans isomerase repertoires.</title>
        <authorList>
            <person name="Pemberton T.J."/>
        </authorList>
    </citation>
    <scope>REVISION OF GENE MODEL</scope>
</reference>
<reference key="4">
    <citation type="journal article" date="2015" name="BMC Genomics">
        <title>The completed genome sequence of the pathogenic ascomycete fungus Fusarium graminearum.</title>
        <authorList>
            <person name="King R."/>
            <person name="Urban M."/>
            <person name="Hammond-Kosack M.C.U."/>
            <person name="Hassani-Pak K."/>
            <person name="Hammond-Kosack K.E."/>
        </authorList>
    </citation>
    <scope>NUCLEOTIDE SEQUENCE [LARGE SCALE GENOMIC DNA]</scope>
    <source>
        <strain>ATCC MYA-4620 / CBS 123657 / FGSC 9075 / NRRL 31084 / PH-1</strain>
    </source>
</reference>
<organism>
    <name type="scientific">Gibberella zeae (strain ATCC MYA-4620 / CBS 123657 / FGSC 9075 / NRRL 31084 / PH-1)</name>
    <name type="common">Wheat head blight fungus</name>
    <name type="synonym">Fusarium graminearum</name>
    <dbReference type="NCBI Taxonomy" id="229533"/>
    <lineage>
        <taxon>Eukaryota</taxon>
        <taxon>Fungi</taxon>
        <taxon>Dikarya</taxon>
        <taxon>Ascomycota</taxon>
        <taxon>Pezizomycotina</taxon>
        <taxon>Sordariomycetes</taxon>
        <taxon>Hypocreomycetidae</taxon>
        <taxon>Hypocreales</taxon>
        <taxon>Nectriaceae</taxon>
        <taxon>Fusarium</taxon>
    </lineage>
</organism>